<comment type="function">
    <text evidence="1">Channel that opens in response to stretch forces in the membrane lipid bilayer. May participate in the regulation of osmotic pressure changes within the cell.</text>
</comment>
<comment type="subunit">
    <text evidence="1">Homopentamer.</text>
</comment>
<comment type="subcellular location">
    <subcellularLocation>
        <location evidence="1">Cell inner membrane</location>
        <topology evidence="1">Multi-pass membrane protein</topology>
    </subcellularLocation>
</comment>
<comment type="similarity">
    <text evidence="1">Belongs to the MscL family.</text>
</comment>
<gene>
    <name evidence="1" type="primary">mscL</name>
    <name type="ordered locus">PD_0027</name>
</gene>
<dbReference type="EMBL" id="AE009442">
    <property type="protein sequence ID" value="AAO27934.1"/>
    <property type="molecule type" value="Genomic_DNA"/>
</dbReference>
<dbReference type="RefSeq" id="WP_011097480.1">
    <property type="nucleotide sequence ID" value="NC_004556.1"/>
</dbReference>
<dbReference type="SMR" id="Q87FA1"/>
<dbReference type="GeneID" id="93903718"/>
<dbReference type="KEGG" id="xft:PD_0027"/>
<dbReference type="HOGENOM" id="CLU_095787_0_0_6"/>
<dbReference type="Proteomes" id="UP000002516">
    <property type="component" value="Chromosome"/>
</dbReference>
<dbReference type="GO" id="GO:0005886">
    <property type="term" value="C:plasma membrane"/>
    <property type="evidence" value="ECO:0007669"/>
    <property type="project" value="UniProtKB-SubCell"/>
</dbReference>
<dbReference type="GO" id="GO:0008381">
    <property type="term" value="F:mechanosensitive monoatomic ion channel activity"/>
    <property type="evidence" value="ECO:0007669"/>
    <property type="project" value="UniProtKB-UniRule"/>
</dbReference>
<dbReference type="FunFam" id="1.10.1200.120:FF:000001">
    <property type="entry name" value="Large-conductance mechanosensitive channel"/>
    <property type="match status" value="1"/>
</dbReference>
<dbReference type="Gene3D" id="1.10.1200.120">
    <property type="entry name" value="Large-conductance mechanosensitive channel, MscL, domain 1"/>
    <property type="match status" value="1"/>
</dbReference>
<dbReference type="HAMAP" id="MF_00115">
    <property type="entry name" value="MscL"/>
    <property type="match status" value="1"/>
</dbReference>
<dbReference type="InterPro" id="IPR019823">
    <property type="entry name" value="Mechanosensitive_channel_CS"/>
</dbReference>
<dbReference type="InterPro" id="IPR001185">
    <property type="entry name" value="MS_channel"/>
</dbReference>
<dbReference type="InterPro" id="IPR037673">
    <property type="entry name" value="MSC/AndL"/>
</dbReference>
<dbReference type="InterPro" id="IPR036019">
    <property type="entry name" value="MscL_channel"/>
</dbReference>
<dbReference type="NCBIfam" id="TIGR00220">
    <property type="entry name" value="mscL"/>
    <property type="match status" value="1"/>
</dbReference>
<dbReference type="NCBIfam" id="NF001843">
    <property type="entry name" value="PRK00567.1-4"/>
    <property type="match status" value="1"/>
</dbReference>
<dbReference type="PANTHER" id="PTHR30266:SF2">
    <property type="entry name" value="LARGE-CONDUCTANCE MECHANOSENSITIVE CHANNEL"/>
    <property type="match status" value="1"/>
</dbReference>
<dbReference type="PANTHER" id="PTHR30266">
    <property type="entry name" value="MECHANOSENSITIVE CHANNEL MSCL"/>
    <property type="match status" value="1"/>
</dbReference>
<dbReference type="Pfam" id="PF01741">
    <property type="entry name" value="MscL"/>
    <property type="match status" value="1"/>
</dbReference>
<dbReference type="PRINTS" id="PR01264">
    <property type="entry name" value="MECHCHANNEL"/>
</dbReference>
<dbReference type="SUPFAM" id="SSF81330">
    <property type="entry name" value="Gated mechanosensitive channel"/>
    <property type="match status" value="1"/>
</dbReference>
<dbReference type="PROSITE" id="PS01327">
    <property type="entry name" value="MSCL"/>
    <property type="match status" value="1"/>
</dbReference>
<name>MSCL_XYLFT</name>
<reference key="1">
    <citation type="journal article" date="2003" name="J. Bacteriol.">
        <title>Comparative analyses of the complete genome sequences of Pierce's disease and citrus variegated chlorosis strains of Xylella fastidiosa.</title>
        <authorList>
            <person name="Van Sluys M.A."/>
            <person name="de Oliveira M.C."/>
            <person name="Monteiro-Vitorello C.B."/>
            <person name="Miyaki C.Y."/>
            <person name="Furlan L.R."/>
            <person name="Camargo L.E.A."/>
            <person name="da Silva A.C.R."/>
            <person name="Moon D.H."/>
            <person name="Takita M.A."/>
            <person name="Lemos E.G.M."/>
            <person name="Machado M.A."/>
            <person name="Ferro M.I.T."/>
            <person name="da Silva F.R."/>
            <person name="Goldman M.H.S."/>
            <person name="Goldman G.H."/>
            <person name="Lemos M.V.F."/>
            <person name="El-Dorry H."/>
            <person name="Tsai S.M."/>
            <person name="Carrer H."/>
            <person name="Carraro D.M."/>
            <person name="de Oliveira R.C."/>
            <person name="Nunes L.R."/>
            <person name="Siqueira W.J."/>
            <person name="Coutinho L.L."/>
            <person name="Kimura E.T."/>
            <person name="Ferro E.S."/>
            <person name="Harakava R."/>
            <person name="Kuramae E.E."/>
            <person name="Marino C.L."/>
            <person name="Giglioti E."/>
            <person name="Abreu I.L."/>
            <person name="Alves L.M.C."/>
            <person name="do Amaral A.M."/>
            <person name="Baia G.S."/>
            <person name="Blanco S.R."/>
            <person name="Brito M.S."/>
            <person name="Cannavan F.S."/>
            <person name="Celestino A.V."/>
            <person name="da Cunha A.F."/>
            <person name="Fenille R.C."/>
            <person name="Ferro J.A."/>
            <person name="Formighieri E.F."/>
            <person name="Kishi L.T."/>
            <person name="Leoni S.G."/>
            <person name="Oliveira A.R."/>
            <person name="Rosa V.E. Jr."/>
            <person name="Sassaki F.T."/>
            <person name="Sena J.A.D."/>
            <person name="de Souza A.A."/>
            <person name="Truffi D."/>
            <person name="Tsukumo F."/>
            <person name="Yanai G.M."/>
            <person name="Zaros L.G."/>
            <person name="Civerolo E.L."/>
            <person name="Simpson A.J.G."/>
            <person name="Almeida N.F. Jr."/>
            <person name="Setubal J.C."/>
            <person name="Kitajima J.P."/>
        </authorList>
    </citation>
    <scope>NUCLEOTIDE SEQUENCE [LARGE SCALE GENOMIC DNA]</scope>
    <source>
        <strain>Temecula1 / ATCC 700964</strain>
    </source>
</reference>
<evidence type="ECO:0000255" key="1">
    <source>
        <dbReference type="HAMAP-Rule" id="MF_00115"/>
    </source>
</evidence>
<feature type="chain" id="PRO_0000192472" description="Large-conductance mechanosensitive channel">
    <location>
        <begin position="1"/>
        <end position="134"/>
    </location>
</feature>
<feature type="transmembrane region" description="Helical" evidence="1">
    <location>
        <begin position="16"/>
        <end position="36"/>
    </location>
</feature>
<feature type="transmembrane region" description="Helical" evidence="1">
    <location>
        <begin position="81"/>
        <end position="101"/>
    </location>
</feature>
<keyword id="KW-0997">Cell inner membrane</keyword>
<keyword id="KW-1003">Cell membrane</keyword>
<keyword id="KW-0407">Ion channel</keyword>
<keyword id="KW-0406">Ion transport</keyword>
<keyword id="KW-0472">Membrane</keyword>
<keyword id="KW-1185">Reference proteome</keyword>
<keyword id="KW-0812">Transmembrane</keyword>
<keyword id="KW-1133">Transmembrane helix</keyword>
<keyword id="KW-0813">Transport</keyword>
<proteinExistence type="inferred from homology"/>
<sequence length="134" mass="14573">MSFIREFKEFVMRGNVIDLAVAVVIGAAFGKIVTALVDKIISPLIGVMVGGIDFSKLSLTLKAATVDTAGKEVPAVVIGYGDFINTILQFIIIAFAIFIIVKMINKVINKQPLPPETPSEDVLLLREIRDSLKK</sequence>
<protein>
    <recommendedName>
        <fullName evidence="1">Large-conductance mechanosensitive channel</fullName>
    </recommendedName>
</protein>
<organism>
    <name type="scientific">Xylella fastidiosa (strain Temecula1 / ATCC 700964)</name>
    <dbReference type="NCBI Taxonomy" id="183190"/>
    <lineage>
        <taxon>Bacteria</taxon>
        <taxon>Pseudomonadati</taxon>
        <taxon>Pseudomonadota</taxon>
        <taxon>Gammaproteobacteria</taxon>
        <taxon>Lysobacterales</taxon>
        <taxon>Lysobacteraceae</taxon>
        <taxon>Xylella</taxon>
    </lineage>
</organism>
<accession>Q87FA1</accession>